<comment type="function">
    <text evidence="2">Transcription factor that regulates ERG9, but seems to have a more global function in transcription.</text>
</comment>
<comment type="subcellular location">
    <subcellularLocation>
        <location evidence="3">Nucleus</location>
    </subcellularLocation>
</comment>
<comment type="miscellaneous">
    <text evidence="4">Present with 1730 molecules/cell in log phase SD medium.</text>
</comment>
<comment type="similarity">
    <text evidence="5">Belongs to the VHR1 family.</text>
</comment>
<keyword id="KW-0238">DNA-binding</keyword>
<keyword id="KW-0539">Nucleus</keyword>
<keyword id="KW-1185">Reference proteome</keyword>
<keyword id="KW-0804">Transcription</keyword>
<keyword id="KW-0805">Transcription regulation</keyword>
<accession>P40041</accession>
<accession>D3DLW9</accession>
<feature type="chain" id="PRO_0000202632" description="Transcription factor VHR2">
    <location>
        <begin position="1"/>
        <end position="505"/>
    </location>
</feature>
<feature type="region of interest" description="Disordered" evidence="1">
    <location>
        <begin position="1"/>
        <end position="23"/>
    </location>
</feature>
<feature type="region of interest" description="Disordered" evidence="1">
    <location>
        <begin position="105"/>
        <end position="179"/>
    </location>
</feature>
<feature type="region of interest" description="Disordered" evidence="1">
    <location>
        <begin position="421"/>
        <end position="460"/>
    </location>
</feature>
<feature type="compositionally biased region" description="Basic and acidic residues" evidence="1">
    <location>
        <begin position="1"/>
        <end position="16"/>
    </location>
</feature>
<feature type="compositionally biased region" description="Low complexity" evidence="1">
    <location>
        <begin position="133"/>
        <end position="148"/>
    </location>
</feature>
<feature type="compositionally biased region" description="Polar residues" evidence="1">
    <location>
        <begin position="421"/>
        <end position="443"/>
    </location>
</feature>
<gene>
    <name type="primary">VHR2</name>
    <name type="ordered locus">YER064C</name>
</gene>
<name>VHR2_YEAST</name>
<reference key="1">
    <citation type="journal article" date="1997" name="Nature">
        <title>The nucleotide sequence of Saccharomyces cerevisiae chromosome V.</title>
        <authorList>
            <person name="Dietrich F.S."/>
            <person name="Mulligan J.T."/>
            <person name="Hennessy K.M."/>
            <person name="Yelton M.A."/>
            <person name="Allen E."/>
            <person name="Araujo R."/>
            <person name="Aviles E."/>
            <person name="Berno A."/>
            <person name="Brennan T."/>
            <person name="Carpenter J."/>
            <person name="Chen E."/>
            <person name="Cherry J.M."/>
            <person name="Chung E."/>
            <person name="Duncan M."/>
            <person name="Guzman E."/>
            <person name="Hartzell G."/>
            <person name="Hunicke-Smith S."/>
            <person name="Hyman R.W."/>
            <person name="Kayser A."/>
            <person name="Komp C."/>
            <person name="Lashkari D."/>
            <person name="Lew H."/>
            <person name="Lin D."/>
            <person name="Mosedale D."/>
            <person name="Nakahara K."/>
            <person name="Namath A."/>
            <person name="Norgren R."/>
            <person name="Oefner P."/>
            <person name="Oh C."/>
            <person name="Petel F.X."/>
            <person name="Roberts D."/>
            <person name="Sehl P."/>
            <person name="Schramm S."/>
            <person name="Shogren T."/>
            <person name="Smith V."/>
            <person name="Taylor P."/>
            <person name="Wei Y."/>
            <person name="Botstein D."/>
            <person name="Davis R.W."/>
        </authorList>
    </citation>
    <scope>NUCLEOTIDE SEQUENCE [LARGE SCALE GENOMIC DNA]</scope>
    <source>
        <strain>ATCC 204508 / S288c</strain>
    </source>
</reference>
<reference key="2">
    <citation type="journal article" date="2014" name="G3 (Bethesda)">
        <title>The reference genome sequence of Saccharomyces cerevisiae: Then and now.</title>
        <authorList>
            <person name="Engel S.R."/>
            <person name="Dietrich F.S."/>
            <person name="Fisk D.G."/>
            <person name="Binkley G."/>
            <person name="Balakrishnan R."/>
            <person name="Costanzo M.C."/>
            <person name="Dwight S.S."/>
            <person name="Hitz B.C."/>
            <person name="Karra K."/>
            <person name="Nash R.S."/>
            <person name="Weng S."/>
            <person name="Wong E.D."/>
            <person name="Lloyd P."/>
            <person name="Skrzypek M.S."/>
            <person name="Miyasato S.R."/>
            <person name="Simison M."/>
            <person name="Cherry J.M."/>
        </authorList>
    </citation>
    <scope>GENOME REANNOTATION</scope>
    <source>
        <strain>ATCC 204508 / S288c</strain>
    </source>
</reference>
<reference key="3">
    <citation type="journal article" date="2001" name="Biochim. Biophys. Acta">
        <title>Positive and negative regulation of squalene synthase (ERG9), an ergosterol biosynthetic gene, in Saccharomyces cerevisiae.</title>
        <authorList>
            <person name="Kennedy M.A."/>
            <person name="Bard M."/>
        </authorList>
    </citation>
    <scope>FUNCTION</scope>
</reference>
<reference key="4">
    <citation type="journal article" date="2003" name="Nature">
        <title>Global analysis of protein localization in budding yeast.</title>
        <authorList>
            <person name="Huh W.-K."/>
            <person name="Falvo J.V."/>
            <person name="Gerke L.C."/>
            <person name="Carroll A.S."/>
            <person name="Howson R.W."/>
            <person name="Weissman J.S."/>
            <person name="O'Shea E.K."/>
        </authorList>
    </citation>
    <scope>SUBCELLULAR LOCATION [LARGE SCALE ANALYSIS]</scope>
</reference>
<reference key="5">
    <citation type="journal article" date="2003" name="Nature">
        <title>Global analysis of protein expression in yeast.</title>
        <authorList>
            <person name="Ghaemmaghami S."/>
            <person name="Huh W.-K."/>
            <person name="Bower K."/>
            <person name="Howson R.W."/>
            <person name="Belle A."/>
            <person name="Dephoure N."/>
            <person name="O'Shea E.K."/>
            <person name="Weissman J.S."/>
        </authorList>
    </citation>
    <scope>LEVEL OF PROTEIN EXPRESSION [LARGE SCALE ANALYSIS]</scope>
</reference>
<reference key="6">
    <citation type="journal article" date="2011" name="Genome Biol.">
        <title>Curated collection of yeast transcription factor DNA binding specificity data reveals novel structural and gene regulatory insights.</title>
        <authorList>
            <person name="Gordan R."/>
            <person name="Murphy K.F."/>
            <person name="McCord R.P."/>
            <person name="Zhu C."/>
            <person name="Vedenko A."/>
            <person name="Bulyk M.L."/>
        </authorList>
    </citation>
    <scope>DNA-BINDING</scope>
    <scope>POSSIBLE FUNCTION</scope>
</reference>
<protein>
    <recommendedName>
        <fullName>Transcription factor VHR2</fullName>
    </recommendedName>
    <alternativeName>
        <fullName>VHT1 regulator 2</fullName>
    </alternativeName>
</protein>
<dbReference type="EMBL" id="U18813">
    <property type="protein sequence ID" value="AAB64600.1"/>
    <property type="molecule type" value="Genomic_DNA"/>
</dbReference>
<dbReference type="EMBL" id="BK006939">
    <property type="protein sequence ID" value="DAA07723.1"/>
    <property type="molecule type" value="Genomic_DNA"/>
</dbReference>
<dbReference type="PIR" id="S50567">
    <property type="entry name" value="S50567"/>
</dbReference>
<dbReference type="RefSeq" id="NP_010986.1">
    <property type="nucleotide sequence ID" value="NM_001178955.1"/>
</dbReference>
<dbReference type="SMR" id="P40041"/>
<dbReference type="BioGRID" id="36806">
    <property type="interactions" value="58"/>
</dbReference>
<dbReference type="DIP" id="DIP-4619N"/>
<dbReference type="FunCoup" id="P40041">
    <property type="interactions" value="172"/>
</dbReference>
<dbReference type="IntAct" id="P40041">
    <property type="interactions" value="6"/>
</dbReference>
<dbReference type="MINT" id="P40041"/>
<dbReference type="STRING" id="4932.YER064C"/>
<dbReference type="GlyGen" id="P40041">
    <property type="glycosylation" value="1 site"/>
</dbReference>
<dbReference type="iPTMnet" id="P40041"/>
<dbReference type="PaxDb" id="4932-YER064C"/>
<dbReference type="PeptideAtlas" id="P40041"/>
<dbReference type="EnsemblFungi" id="YER064C_mRNA">
    <property type="protein sequence ID" value="YER064C"/>
    <property type="gene ID" value="YER064C"/>
</dbReference>
<dbReference type="GeneID" id="856793"/>
<dbReference type="KEGG" id="sce:YER064C"/>
<dbReference type="AGR" id="SGD:S000000866"/>
<dbReference type="SGD" id="S000000866">
    <property type="gene designation" value="VHR2"/>
</dbReference>
<dbReference type="VEuPathDB" id="FungiDB:YER064C"/>
<dbReference type="eggNOG" id="ENOG502QVE1">
    <property type="taxonomic scope" value="Eukaryota"/>
</dbReference>
<dbReference type="GeneTree" id="ENSGT00940000176700"/>
<dbReference type="HOGENOM" id="CLU_006698_2_0_1"/>
<dbReference type="InParanoid" id="P40041"/>
<dbReference type="OrthoDB" id="4089008at2759"/>
<dbReference type="BioCyc" id="YEAST:G3O-30239-MONOMER"/>
<dbReference type="BioGRID-ORCS" id="856793">
    <property type="hits" value="0 hits in 13 CRISPR screens"/>
</dbReference>
<dbReference type="PRO" id="PR:P40041"/>
<dbReference type="Proteomes" id="UP000002311">
    <property type="component" value="Chromosome V"/>
</dbReference>
<dbReference type="RNAct" id="P40041">
    <property type="molecule type" value="protein"/>
</dbReference>
<dbReference type="GO" id="GO:0005737">
    <property type="term" value="C:cytoplasm"/>
    <property type="evidence" value="ECO:0007005"/>
    <property type="project" value="SGD"/>
</dbReference>
<dbReference type="GO" id="GO:0005634">
    <property type="term" value="C:nucleus"/>
    <property type="evidence" value="ECO:0007005"/>
    <property type="project" value="SGD"/>
</dbReference>
<dbReference type="GO" id="GO:0003677">
    <property type="term" value="F:DNA binding"/>
    <property type="evidence" value="ECO:0007669"/>
    <property type="project" value="UniProtKB-KW"/>
</dbReference>
<dbReference type="GO" id="GO:0006355">
    <property type="term" value="P:regulation of DNA-templated transcription"/>
    <property type="evidence" value="ECO:0000315"/>
    <property type="project" value="SGD"/>
</dbReference>
<dbReference type="InterPro" id="IPR007147">
    <property type="entry name" value="TF_Vhr"/>
</dbReference>
<dbReference type="Pfam" id="PF04001">
    <property type="entry name" value="Vhr1"/>
    <property type="match status" value="1"/>
</dbReference>
<sequence length="505" mass="56638">MIDDTENSKIHLEGSHKTGKYTGYGTTHKIRAQLNFNDEKKWKKFSSRRLELIDSFGLSQHKASEQDDNIRQIATILRSEFEYPDTFSAEFEKLVTAAVQSVRRNRKRSKKKLLDSKKKIARGKVQKIPLSPPSSSNMGSCSASNASSSDEEASVKEEPAEHALPSLNTITSQKLLPYPNGRTLPPVPTQVRSLLKKNASLLRDPSAPYAHGGDEKLQKFDIEDQPLESEQEYDFIAKSIIVEIVNNAIPLPEQIQRDKFIRPNLTKKKGCQSKVVISNNLRKLILSKIHNSRTCLEMSKDERNLDSFANLETLGKNSLMASISLVVENSFSHLPSSTKQYLTERLSSIEFLTILSQRLFMPATRQLFADLSQEKIQVRVLNLILGSLVKDYGFDASLAPINEIIYHMTLHQYPLVCSNKQSNPMRPHSTSEVLSAHSSTKDASTPGKEEPRVTRSSTSADSTIITLPSIEVPNTYDDDRLKMLSAISLQIENSTFSKPFSTISK</sequence>
<proteinExistence type="evidence at protein level"/>
<organism>
    <name type="scientific">Saccharomyces cerevisiae (strain ATCC 204508 / S288c)</name>
    <name type="common">Baker's yeast</name>
    <dbReference type="NCBI Taxonomy" id="559292"/>
    <lineage>
        <taxon>Eukaryota</taxon>
        <taxon>Fungi</taxon>
        <taxon>Dikarya</taxon>
        <taxon>Ascomycota</taxon>
        <taxon>Saccharomycotina</taxon>
        <taxon>Saccharomycetes</taxon>
        <taxon>Saccharomycetales</taxon>
        <taxon>Saccharomycetaceae</taxon>
        <taxon>Saccharomyces</taxon>
    </lineage>
</organism>
<evidence type="ECO:0000256" key="1">
    <source>
        <dbReference type="SAM" id="MobiDB-lite"/>
    </source>
</evidence>
<evidence type="ECO:0000269" key="2">
    <source>
    </source>
</evidence>
<evidence type="ECO:0000269" key="3">
    <source>
    </source>
</evidence>
<evidence type="ECO:0000269" key="4">
    <source>
    </source>
</evidence>
<evidence type="ECO:0000305" key="5"/>